<gene>
    <name evidence="1" type="primary">asd</name>
    <name type="ordered locus">MJ0817</name>
</gene>
<evidence type="ECO:0000255" key="1">
    <source>
        <dbReference type="HAMAP-Rule" id="MF_00664"/>
    </source>
</evidence>
<proteinExistence type="inferred from homology"/>
<sequence>MGKYKKFFAIAVCSLLLFTVYFYRDPDRVITKGNNIILSPADGTVEYIKFYENGNPEVFKDGNCYVLNVSRYFPNGCYVVGIFMSPLDVHVNRAPIGGRIVYIKHIDGSFYPAFLEGVEKINERNIVIIKNGSEYVGVVQIAGFVARRCWLSIKEGECINMGQKIGMIKLGSQTAVIIPANYNITVKVGERVYAGQTIIAVKRTDN</sequence>
<protein>
    <recommendedName>
        <fullName evidence="1">Putative archaetidylserine decarboxylase proenzyme</fullName>
        <ecNumber evidence="1">4.1.1.-</ecNumber>
    </recommendedName>
    <component>
        <recommendedName>
            <fullName evidence="1">Archaetidylserine decarboxylase alpha chain</fullName>
        </recommendedName>
    </component>
    <component>
        <recommendedName>
            <fullName evidence="1">Archaetidylserine decarboxylase beta chain</fullName>
        </recommendedName>
    </component>
</protein>
<feature type="chain" id="PRO_0000029825" description="Archaetidylserine decarboxylase beta chain" evidence="1">
    <location>
        <begin position="1"/>
        <end position="171"/>
    </location>
</feature>
<feature type="chain" id="PRO_0000029826" description="Archaetidylserine decarboxylase alpha chain" evidence="1">
    <location>
        <begin position="172"/>
        <end position="206"/>
    </location>
</feature>
<feature type="active site" description="Schiff-base intermediate with substrate; via pyruvic acid" evidence="1">
    <location>
        <position position="172"/>
    </location>
</feature>
<feature type="site" description="Cleavage (non-hydrolytic); by autocatalysis" evidence="1">
    <location>
        <begin position="171"/>
        <end position="172"/>
    </location>
</feature>
<feature type="modified residue" description="Pyruvic acid (Ser); by autocatalysis" evidence="1">
    <location>
        <position position="172"/>
    </location>
</feature>
<organism>
    <name type="scientific">Methanocaldococcus jannaschii (strain ATCC 43067 / DSM 2661 / JAL-1 / JCM 10045 / NBRC 100440)</name>
    <name type="common">Methanococcus jannaschii</name>
    <dbReference type="NCBI Taxonomy" id="243232"/>
    <lineage>
        <taxon>Archaea</taxon>
        <taxon>Methanobacteriati</taxon>
        <taxon>Methanobacteriota</taxon>
        <taxon>Methanomada group</taxon>
        <taxon>Methanococci</taxon>
        <taxon>Methanococcales</taxon>
        <taxon>Methanocaldococcaceae</taxon>
        <taxon>Methanocaldococcus</taxon>
    </lineage>
</organism>
<comment type="function">
    <text evidence="1">Catalyzes the formation of archaetidylethanolamine (PtdEtn) from archaetidylserine (PtdSer).</text>
</comment>
<comment type="catalytic activity">
    <reaction evidence="1">
        <text>archaetidylserine + H(+) = archaetidylethanolamine + CO2</text>
        <dbReference type="Rhea" id="RHEA:51488"/>
        <dbReference type="ChEBI" id="CHEBI:15378"/>
        <dbReference type="ChEBI" id="CHEBI:16526"/>
        <dbReference type="ChEBI" id="CHEBI:71517"/>
        <dbReference type="ChEBI" id="CHEBI:134176"/>
    </reaction>
</comment>
<comment type="cofactor">
    <cofactor evidence="1">
        <name>pyruvate</name>
        <dbReference type="ChEBI" id="CHEBI:15361"/>
    </cofactor>
    <text evidence="1">Binds 1 pyruvoyl group covalently per subunit.</text>
</comment>
<comment type="subunit">
    <text evidence="1">Heterodimer of a large membrane-associated beta subunit and a small pyruvoyl-containing alpha subunit.</text>
</comment>
<comment type="subcellular location">
    <subcellularLocation>
        <location evidence="1">Cell membrane</location>
        <topology evidence="1">Peripheral membrane protein</topology>
    </subcellularLocation>
</comment>
<comment type="PTM">
    <text evidence="1">Is synthesized initially as an inactive proenzyme. Formation of the active enzyme involves a self-maturation process in which the active site pyruvoyl group is generated from an internal serine residue via an autocatalytic post-translational modification. Two non-identical subunits are generated from the proenzyme in this reaction, and the pyruvate is formed at the N-terminus of the alpha chain, which is derived from the carboxyl end of the proenzyme. The post-translation cleavage follows an unusual pathway, termed non-hydrolytic serinolysis, in which the side chain hydroxyl group of the serine supplies its oxygen atom to form the C-terminus of the beta chain, while the remainder of the serine residue undergoes an oxidative deamination to produce ammonia and the pyruvoyl prosthetic group on the alpha chain.</text>
</comment>
<comment type="similarity">
    <text evidence="1">Belongs to the phosphatidylserine decarboxylase family. PSD-A subfamily.</text>
</comment>
<dbReference type="EC" id="4.1.1.-" evidence="1"/>
<dbReference type="EMBL" id="L77117">
    <property type="protein sequence ID" value="AAB98815.1"/>
    <property type="molecule type" value="Genomic_DNA"/>
</dbReference>
<dbReference type="PIR" id="A64402">
    <property type="entry name" value="A64402"/>
</dbReference>
<dbReference type="RefSeq" id="WP_010870328.1">
    <property type="nucleotide sequence ID" value="NC_000909.1"/>
</dbReference>
<dbReference type="SMR" id="Q58227"/>
<dbReference type="STRING" id="243232.MJ_0817"/>
<dbReference type="PaxDb" id="243232-MJ_0817"/>
<dbReference type="EnsemblBacteria" id="AAB98815">
    <property type="protein sequence ID" value="AAB98815"/>
    <property type="gene ID" value="MJ_0817"/>
</dbReference>
<dbReference type="GeneID" id="1451700"/>
<dbReference type="KEGG" id="mja:MJ_0817"/>
<dbReference type="eggNOG" id="arCOG04470">
    <property type="taxonomic scope" value="Archaea"/>
</dbReference>
<dbReference type="HOGENOM" id="CLU_072492_1_0_2"/>
<dbReference type="InParanoid" id="Q58227"/>
<dbReference type="OrthoDB" id="50255at2157"/>
<dbReference type="PhylomeDB" id="Q58227"/>
<dbReference type="Proteomes" id="UP000000805">
    <property type="component" value="Chromosome"/>
</dbReference>
<dbReference type="GO" id="GO:0005886">
    <property type="term" value="C:plasma membrane"/>
    <property type="evidence" value="ECO:0007669"/>
    <property type="project" value="UniProtKB-SubCell"/>
</dbReference>
<dbReference type="GO" id="GO:0004609">
    <property type="term" value="F:phosphatidylserine decarboxylase activity"/>
    <property type="evidence" value="ECO:0007669"/>
    <property type="project" value="InterPro"/>
</dbReference>
<dbReference type="GO" id="GO:0008654">
    <property type="term" value="P:phospholipid biosynthetic process"/>
    <property type="evidence" value="ECO:0007669"/>
    <property type="project" value="UniProtKB-UniRule"/>
</dbReference>
<dbReference type="HAMAP" id="MF_00664">
    <property type="entry name" value="PS_decarb_PSD_A"/>
    <property type="match status" value="1"/>
</dbReference>
<dbReference type="InterPro" id="IPR003817">
    <property type="entry name" value="PS_Dcarbxylase"/>
</dbReference>
<dbReference type="InterPro" id="IPR033175">
    <property type="entry name" value="PSD-A"/>
</dbReference>
<dbReference type="NCBIfam" id="TIGR00164">
    <property type="entry name" value="AS_decarb"/>
    <property type="match status" value="1"/>
</dbReference>
<dbReference type="NCBIfam" id="NF003685">
    <property type="entry name" value="PRK05305.2-5"/>
    <property type="match status" value="1"/>
</dbReference>
<dbReference type="PANTHER" id="PTHR35809">
    <property type="entry name" value="ARCHAETIDYLSERINE DECARBOXYLASE PROENZYME-RELATED"/>
    <property type="match status" value="1"/>
</dbReference>
<dbReference type="PANTHER" id="PTHR35809:SF1">
    <property type="entry name" value="ARCHAETIDYLSERINE DECARBOXYLASE PROENZYME-RELATED"/>
    <property type="match status" value="1"/>
</dbReference>
<dbReference type="Pfam" id="PF02666">
    <property type="entry name" value="PS_Dcarbxylase"/>
    <property type="match status" value="1"/>
</dbReference>
<reference key="1">
    <citation type="journal article" date="1996" name="Science">
        <title>Complete genome sequence of the methanogenic archaeon, Methanococcus jannaschii.</title>
        <authorList>
            <person name="Bult C.J."/>
            <person name="White O."/>
            <person name="Olsen G.J."/>
            <person name="Zhou L."/>
            <person name="Fleischmann R.D."/>
            <person name="Sutton G.G."/>
            <person name="Blake J.A."/>
            <person name="FitzGerald L.M."/>
            <person name="Clayton R.A."/>
            <person name="Gocayne J.D."/>
            <person name="Kerlavage A.R."/>
            <person name="Dougherty B.A."/>
            <person name="Tomb J.-F."/>
            <person name="Adams M.D."/>
            <person name="Reich C.I."/>
            <person name="Overbeek R."/>
            <person name="Kirkness E.F."/>
            <person name="Weinstock K.G."/>
            <person name="Merrick J.M."/>
            <person name="Glodek A."/>
            <person name="Scott J.L."/>
            <person name="Geoghagen N.S.M."/>
            <person name="Weidman J.F."/>
            <person name="Fuhrmann J.L."/>
            <person name="Nguyen D."/>
            <person name="Utterback T.R."/>
            <person name="Kelley J.M."/>
            <person name="Peterson J.D."/>
            <person name="Sadow P.W."/>
            <person name="Hanna M.C."/>
            <person name="Cotton M.D."/>
            <person name="Roberts K.M."/>
            <person name="Hurst M.A."/>
            <person name="Kaine B.P."/>
            <person name="Borodovsky M."/>
            <person name="Klenk H.-P."/>
            <person name="Fraser C.M."/>
            <person name="Smith H.O."/>
            <person name="Woese C.R."/>
            <person name="Venter J.C."/>
        </authorList>
    </citation>
    <scope>NUCLEOTIDE SEQUENCE [LARGE SCALE GENOMIC DNA]</scope>
    <source>
        <strain>ATCC 43067 / DSM 2661 / JAL-1 / JCM 10045 / NBRC 100440</strain>
    </source>
</reference>
<accession>Q58227</accession>
<keyword id="KW-1003">Cell membrane</keyword>
<keyword id="KW-0210">Decarboxylase</keyword>
<keyword id="KW-0444">Lipid biosynthesis</keyword>
<keyword id="KW-0443">Lipid metabolism</keyword>
<keyword id="KW-0456">Lyase</keyword>
<keyword id="KW-0472">Membrane</keyword>
<keyword id="KW-0594">Phospholipid biosynthesis</keyword>
<keyword id="KW-1208">Phospholipid metabolism</keyword>
<keyword id="KW-0670">Pyruvate</keyword>
<keyword id="KW-1185">Reference proteome</keyword>
<keyword id="KW-0865">Zymogen</keyword>
<name>ASD_METJA</name>